<sequence>MDPSILSKLEYKTVNNIYYGTGIFIIRDDNDDIKYFKTYGKLTEFKHDSFLLVDLNVMIYDTVKTDYLITISDRQELTLCSASITDLKNFRIKGSRDTTNNSVLFSQFTKNNPLIVKSKNNPIYLEIKFQCETRLLKSLYFFSTGPKCGIKKVDENNYTNEYTHFDNFTEIYQTDEKKHEIVTFNNWYKFDDFIGFKLYNLNFSIINNNMEIIDIEHDRVSLSLNEFVNNFDFELLTEDNPIFIESGNIPSVLFFDKCTDSEYHRINFTVKKIDEID</sequence>
<reference key="1">
    <citation type="journal article" date="2004" name="Science">
        <title>The 1.2-megabase genome sequence of Mimivirus.</title>
        <authorList>
            <person name="Raoult D."/>
            <person name="Audic S."/>
            <person name="Robert C."/>
            <person name="Abergel C."/>
            <person name="Renesto P."/>
            <person name="Ogata H."/>
            <person name="La Scola B."/>
            <person name="Susan M."/>
            <person name="Claverie J.-M."/>
        </authorList>
    </citation>
    <scope>NUCLEOTIDE SEQUENCE [LARGE SCALE GENOMIC DNA]</scope>
    <source>
        <strain>Rowbotham-Bradford</strain>
    </source>
</reference>
<gene>
    <name type="ordered locus">MIMI_L575</name>
</gene>
<name>YL575_MIMIV</name>
<organism>
    <name type="scientific">Acanthamoeba polyphaga mimivirus</name>
    <name type="common">APMV</name>
    <dbReference type="NCBI Taxonomy" id="212035"/>
    <lineage>
        <taxon>Viruses</taxon>
        <taxon>Varidnaviria</taxon>
        <taxon>Bamfordvirae</taxon>
        <taxon>Nucleocytoviricota</taxon>
        <taxon>Megaviricetes</taxon>
        <taxon>Imitervirales</taxon>
        <taxon>Mimiviridae</taxon>
        <taxon>Megamimivirinae</taxon>
        <taxon>Mimivirus</taxon>
        <taxon>Mimivirus bradfordmassiliense</taxon>
    </lineage>
</organism>
<organismHost>
    <name type="scientific">Acanthamoeba polyphaga</name>
    <name type="common">Amoeba</name>
    <dbReference type="NCBI Taxonomy" id="5757"/>
</organismHost>
<protein>
    <recommendedName>
        <fullName>Uncharacterized protein L575</fullName>
    </recommendedName>
</protein>
<proteinExistence type="predicted"/>
<keyword id="KW-1185">Reference proteome</keyword>
<feature type="chain" id="PRO_0000247286" description="Uncharacterized protein L575">
    <location>
        <begin position="1"/>
        <end position="277"/>
    </location>
</feature>
<accession>Q5UR97</accession>
<dbReference type="EMBL" id="AY653733">
    <property type="protein sequence ID" value="AAV50838.1"/>
    <property type="molecule type" value="Genomic_DNA"/>
</dbReference>
<dbReference type="KEGG" id="vg:9925210"/>
<dbReference type="Proteomes" id="UP000001134">
    <property type="component" value="Genome"/>
</dbReference>